<evidence type="ECO:0000250" key="1"/>
<evidence type="ECO:0000255" key="2"/>
<evidence type="ECO:0000256" key="3">
    <source>
        <dbReference type="SAM" id="MobiDB-lite"/>
    </source>
</evidence>
<evidence type="ECO:0000305" key="4"/>
<organismHost>
    <name type="scientific">Mus musculus</name>
    <name type="common">Mouse</name>
    <dbReference type="NCBI Taxonomy" id="10090"/>
</organismHost>
<organism>
    <name type="scientific">Mouse mammary tumor virus (strain GR)</name>
    <name type="common">MMTV</name>
    <dbReference type="NCBI Taxonomy" id="11760"/>
    <lineage>
        <taxon>Viruses</taxon>
        <taxon>Riboviria</taxon>
        <taxon>Pararnavirae</taxon>
        <taxon>Artverviricota</taxon>
        <taxon>Revtraviricetes</taxon>
        <taxon>Ortervirales</taxon>
        <taxon>Retroviridae</taxon>
        <taxon>Orthoretrovirinae</taxon>
        <taxon>Betaretrovirus</taxon>
        <taxon>Mouse mammary tumor virus</taxon>
    </lineage>
</organism>
<proteinExistence type="inferred from homology"/>
<reference key="1">
    <citation type="journal article" date="1983" name="Nucleic Acids Res.">
        <title>Nucleotide sequence of the 5' noncoding region and part of the gag gene of mouse mammary tumor virus; identification of the 5' splicing site for subgenomic mRNAs.</title>
        <authorList>
            <person name="Fasel N."/>
            <person name="Buetti E."/>
            <person name="Firzlaff J."/>
            <person name="Pearson K."/>
            <person name="Diggelmann H."/>
        </authorList>
    </citation>
    <scope>NUCLEOTIDE SEQUENCE [GENOMIC RNA]</scope>
</reference>
<comment type="function">
    <molecule>Matrix protein p10</molecule>
    <text>Matrix protein.</text>
</comment>
<comment type="function">
    <text>Nucleocapsid protein p14: Nucleocapsid protein. Binds to single-stranded DNA.</text>
</comment>
<comment type="function">
    <molecule>Capsid protein p27</molecule>
    <text>Capsid protein.</text>
</comment>
<comment type="subcellular location">
    <molecule>Matrix protein p10</molecule>
    <subcellularLocation>
        <location evidence="4">Virion</location>
    </subcellularLocation>
</comment>
<comment type="subcellular location">
    <molecule>Capsid protein p27</molecule>
    <subcellularLocation>
        <location evidence="4">Virion</location>
    </subcellularLocation>
</comment>
<comment type="domain">
    <text evidence="4">Late-budding domains (L domains) are short sequence motifs essential for viral particle budding. They recruit proteins of the host ESCRT machinery (Endosomal Sorting Complex Required for Transport) or ESCRT-associated proteins. Gag-p27 contains one L domain: a PTAP/PSAP motif, which interacts with the UEV domain of TSG101 (Potential).</text>
</comment>
<comment type="PTM">
    <text evidence="1">p10 is myristoylated.</text>
</comment>
<name>GAG_MMTVG</name>
<gene>
    <name type="primary">gag</name>
</gene>
<sequence length="353" mass="40375">MGVSGSKGQKLFVSVLQRLLSERGLHVKESSTIEFYQFLIKVSLGFPKKEDLNLQDWKRVGREMKKYAADDGTDSIPKQAYPIWLQLREILTEQSDLVLLSAEAKSVTEEELEEGLTGLLSASSQEKTYGTRGTAYAEIDTEADKLSEHIYDEPYEEKEKADKNEEKDHVRKVKKIVQRKENSEHKRKEKDQKAFLATDWNDDDLSPEDWDNLEEQAAHYHDDDELILPVKRKVVKKKPLALRRKPLPPVGFAGAMAEAREKGDLTFTFPVVFMGESDDDDTPVWEPLPLKTLKELQSAVRTMGPSAPYTLEVVDMVASQWLTPSDWHQTARATLSPGDYVLWRTEYEEKSKE</sequence>
<protein>
    <recommendedName>
        <fullName>Gag polyprotein</fullName>
    </recommendedName>
    <component>
        <recommendedName>
            <fullName>Matrix protein p10</fullName>
        </recommendedName>
    </component>
    <component>
        <recommendedName>
            <fullName>Phosphorylated protein pp21</fullName>
        </recommendedName>
    </component>
    <component>
        <recommendedName>
            <fullName>Protein p3</fullName>
        </recommendedName>
    </component>
    <component>
        <recommendedName>
            <fullName>Protein p8</fullName>
        </recommendedName>
    </component>
    <component>
        <recommendedName>
            <fullName>Protein n</fullName>
        </recommendedName>
    </component>
    <component>
        <recommendedName>
            <fullName>Capsid protein p27</fullName>
        </recommendedName>
    </component>
</protein>
<accession>P03343</accession>
<feature type="initiator methionine" description="Removed; by host" evidence="1">
    <location>
        <position position="1"/>
    </location>
</feature>
<feature type="chain" id="PRO_0000040934" description="Matrix protein p10" evidence="1">
    <location>
        <begin position="2"/>
        <end position="99"/>
    </location>
</feature>
<feature type="chain" id="PRO_0000040935" description="Phosphorylated protein pp21" evidence="1">
    <location>
        <begin position="100"/>
        <end position="195"/>
    </location>
</feature>
<feature type="chain" id="PRO_0000040936" description="Protein p3" evidence="1">
    <location>
        <begin position="196"/>
        <end position="228"/>
    </location>
</feature>
<feature type="chain" id="PRO_0000040937" description="Protein p8" evidence="1">
    <location>
        <begin position="229"/>
        <end position="252"/>
    </location>
</feature>
<feature type="chain" id="PRO_0000040938" description="Protein n" evidence="1">
    <location>
        <begin position="253"/>
        <end position="269"/>
    </location>
</feature>
<feature type="chain" id="PRO_0000040939" description="Capsid protein p27" evidence="1">
    <location>
        <begin position="270"/>
        <end position="353" status="greater than"/>
    </location>
</feature>
<feature type="region of interest" description="Disordered" evidence="3">
    <location>
        <begin position="151"/>
        <end position="192"/>
    </location>
</feature>
<feature type="short sequence motif" description="PTAP/PSAP motif" evidence="2">
    <location>
        <begin position="305"/>
        <end position="308"/>
    </location>
</feature>
<feature type="compositionally biased region" description="Basic and acidic residues" evidence="3">
    <location>
        <begin position="151"/>
        <end position="169"/>
    </location>
</feature>
<feature type="compositionally biased region" description="Basic and acidic residues" evidence="3">
    <location>
        <begin position="178"/>
        <end position="192"/>
    </location>
</feature>
<feature type="lipid moiety-binding region" description="N-myristoyl glycine; by host" evidence="1">
    <location>
        <position position="2"/>
    </location>
</feature>
<feature type="non-terminal residue">
    <location>
        <position position="353"/>
    </location>
</feature>
<keyword id="KW-0167">Capsid protein</keyword>
<keyword id="KW-0238">DNA-binding</keyword>
<keyword id="KW-0945">Host-virus interaction</keyword>
<keyword id="KW-0449">Lipoprotein</keyword>
<keyword id="KW-0519">Myristate</keyword>
<keyword id="KW-0547">Nucleotide-binding</keyword>
<keyword id="KW-0597">Phosphoprotein</keyword>
<keyword id="KW-1198">Viral budding</keyword>
<keyword id="KW-1187">Viral budding via the host ESCRT complexes</keyword>
<keyword id="KW-0468">Viral matrix protein</keyword>
<keyword id="KW-0543">Viral nucleoprotein</keyword>
<keyword id="KW-1188">Viral release from host cell</keyword>
<keyword id="KW-0946">Virion</keyword>
<dbReference type="EMBL" id="X00018">
    <property type="protein sequence ID" value="CAA24916.1"/>
    <property type="molecule type" value="Genomic_RNA"/>
</dbReference>
<dbReference type="PIR" id="A03941">
    <property type="entry name" value="FOMVGR"/>
</dbReference>
<dbReference type="SMR" id="P03343"/>
<dbReference type="GO" id="GO:0019013">
    <property type="term" value="C:viral nucleocapsid"/>
    <property type="evidence" value="ECO:0007669"/>
    <property type="project" value="UniProtKB-KW"/>
</dbReference>
<dbReference type="GO" id="GO:0003677">
    <property type="term" value="F:DNA binding"/>
    <property type="evidence" value="ECO:0007669"/>
    <property type="project" value="UniProtKB-KW"/>
</dbReference>
<dbReference type="GO" id="GO:0000166">
    <property type="term" value="F:nucleotide binding"/>
    <property type="evidence" value="ECO:0007669"/>
    <property type="project" value="UniProtKB-KW"/>
</dbReference>
<dbReference type="GO" id="GO:0039660">
    <property type="term" value="F:structural constituent of virion"/>
    <property type="evidence" value="ECO:0007669"/>
    <property type="project" value="UniProtKB-KW"/>
</dbReference>
<dbReference type="GO" id="GO:0039702">
    <property type="term" value="P:viral budding via host ESCRT complex"/>
    <property type="evidence" value="ECO:0007669"/>
    <property type="project" value="UniProtKB-KW"/>
</dbReference>
<dbReference type="Gene3D" id="1.10.375.10">
    <property type="entry name" value="Human Immunodeficiency Virus Type 1 Capsid Protein"/>
    <property type="match status" value="1"/>
</dbReference>
<dbReference type="Gene3D" id="1.10.150.490">
    <property type="entry name" value="Retroviral GAG p10 protein"/>
    <property type="match status" value="1"/>
</dbReference>
<dbReference type="InterPro" id="IPR003322">
    <property type="entry name" value="B_retro_matrix"/>
</dbReference>
<dbReference type="InterPro" id="IPR038124">
    <property type="entry name" value="B_retro_matrix_sf"/>
</dbReference>
<dbReference type="InterPro" id="IPR050195">
    <property type="entry name" value="Primate_lentivir_Gag_pol-like"/>
</dbReference>
<dbReference type="InterPro" id="IPR008919">
    <property type="entry name" value="Retrov_capsid_N"/>
</dbReference>
<dbReference type="InterPro" id="IPR010999">
    <property type="entry name" value="Retrovr_matrix"/>
</dbReference>
<dbReference type="PANTHER" id="PTHR40389">
    <property type="entry name" value="ENDOGENOUS RETROVIRUS GROUP K MEMBER 24 GAG POLYPROTEIN-RELATED"/>
    <property type="match status" value="1"/>
</dbReference>
<dbReference type="PANTHER" id="PTHR40389:SF3">
    <property type="entry name" value="IGE-BINDING PROTEIN"/>
    <property type="match status" value="1"/>
</dbReference>
<dbReference type="Pfam" id="PF02337">
    <property type="entry name" value="Gag_p10"/>
    <property type="match status" value="1"/>
</dbReference>
<dbReference type="Pfam" id="PF00607">
    <property type="entry name" value="Gag_p24"/>
    <property type="match status" value="1"/>
</dbReference>
<dbReference type="SUPFAM" id="SSF47836">
    <property type="entry name" value="Retroviral matrix proteins"/>
    <property type="match status" value="1"/>
</dbReference>
<dbReference type="SUPFAM" id="SSF47943">
    <property type="entry name" value="Retrovirus capsid protein, N-terminal core domain"/>
    <property type="match status" value="1"/>
</dbReference>